<organism>
    <name type="scientific">Rhodopseudomonas palustris (strain TIE-1)</name>
    <dbReference type="NCBI Taxonomy" id="395960"/>
    <lineage>
        <taxon>Bacteria</taxon>
        <taxon>Pseudomonadati</taxon>
        <taxon>Pseudomonadota</taxon>
        <taxon>Alphaproteobacteria</taxon>
        <taxon>Hyphomicrobiales</taxon>
        <taxon>Nitrobacteraceae</taxon>
        <taxon>Rhodopseudomonas</taxon>
    </lineage>
</organism>
<keyword id="KW-0963">Cytoplasm</keyword>
<keyword id="KW-0227">DNA damage</keyword>
<keyword id="KW-0233">DNA recombination</keyword>
<keyword id="KW-0234">DNA repair</keyword>
<keyword id="KW-0238">DNA-binding</keyword>
<protein>
    <recommendedName>
        <fullName evidence="1">Holliday junction branch migration complex subunit RuvA</fullName>
    </recommendedName>
</protein>
<name>RUVA_RHOPT</name>
<dbReference type="EMBL" id="CP001096">
    <property type="protein sequence ID" value="ACE99829.1"/>
    <property type="molecule type" value="Genomic_DNA"/>
</dbReference>
<dbReference type="RefSeq" id="WP_012494822.1">
    <property type="nucleotide sequence ID" value="NC_011004.1"/>
</dbReference>
<dbReference type="SMR" id="B3QHS2"/>
<dbReference type="KEGG" id="rpt:Rpal_1290"/>
<dbReference type="HOGENOM" id="CLU_087936_3_0_5"/>
<dbReference type="OrthoDB" id="5293449at2"/>
<dbReference type="Proteomes" id="UP000001725">
    <property type="component" value="Chromosome"/>
</dbReference>
<dbReference type="GO" id="GO:0005737">
    <property type="term" value="C:cytoplasm"/>
    <property type="evidence" value="ECO:0007669"/>
    <property type="project" value="UniProtKB-SubCell"/>
</dbReference>
<dbReference type="GO" id="GO:0009379">
    <property type="term" value="C:Holliday junction helicase complex"/>
    <property type="evidence" value="ECO:0007669"/>
    <property type="project" value="InterPro"/>
</dbReference>
<dbReference type="GO" id="GO:0048476">
    <property type="term" value="C:Holliday junction resolvase complex"/>
    <property type="evidence" value="ECO:0007669"/>
    <property type="project" value="UniProtKB-UniRule"/>
</dbReference>
<dbReference type="GO" id="GO:0005524">
    <property type="term" value="F:ATP binding"/>
    <property type="evidence" value="ECO:0007669"/>
    <property type="project" value="InterPro"/>
</dbReference>
<dbReference type="GO" id="GO:0000400">
    <property type="term" value="F:four-way junction DNA binding"/>
    <property type="evidence" value="ECO:0007669"/>
    <property type="project" value="UniProtKB-UniRule"/>
</dbReference>
<dbReference type="GO" id="GO:0009378">
    <property type="term" value="F:four-way junction helicase activity"/>
    <property type="evidence" value="ECO:0007669"/>
    <property type="project" value="InterPro"/>
</dbReference>
<dbReference type="GO" id="GO:0006310">
    <property type="term" value="P:DNA recombination"/>
    <property type="evidence" value="ECO:0007669"/>
    <property type="project" value="UniProtKB-UniRule"/>
</dbReference>
<dbReference type="GO" id="GO:0006281">
    <property type="term" value="P:DNA repair"/>
    <property type="evidence" value="ECO:0007669"/>
    <property type="project" value="UniProtKB-UniRule"/>
</dbReference>
<dbReference type="Gene3D" id="1.10.150.20">
    <property type="entry name" value="5' to 3' exonuclease, C-terminal subdomain"/>
    <property type="match status" value="1"/>
</dbReference>
<dbReference type="Gene3D" id="1.10.8.10">
    <property type="entry name" value="DNA helicase RuvA subunit, C-terminal domain"/>
    <property type="match status" value="1"/>
</dbReference>
<dbReference type="Gene3D" id="2.40.50.140">
    <property type="entry name" value="Nucleic acid-binding proteins"/>
    <property type="match status" value="1"/>
</dbReference>
<dbReference type="HAMAP" id="MF_00031">
    <property type="entry name" value="DNA_HJ_migration_RuvA"/>
    <property type="match status" value="1"/>
</dbReference>
<dbReference type="InterPro" id="IPR013849">
    <property type="entry name" value="DNA_helicase_Holl-junc_RuvA_I"/>
</dbReference>
<dbReference type="InterPro" id="IPR012340">
    <property type="entry name" value="NA-bd_OB-fold"/>
</dbReference>
<dbReference type="InterPro" id="IPR000085">
    <property type="entry name" value="RuvA"/>
</dbReference>
<dbReference type="InterPro" id="IPR010994">
    <property type="entry name" value="RuvA_2-like"/>
</dbReference>
<dbReference type="InterPro" id="IPR011114">
    <property type="entry name" value="RuvA_C"/>
</dbReference>
<dbReference type="InterPro" id="IPR036267">
    <property type="entry name" value="RuvA_C_sf"/>
</dbReference>
<dbReference type="NCBIfam" id="TIGR00084">
    <property type="entry name" value="ruvA"/>
    <property type="match status" value="1"/>
</dbReference>
<dbReference type="Pfam" id="PF14520">
    <property type="entry name" value="HHH_5"/>
    <property type="match status" value="1"/>
</dbReference>
<dbReference type="Pfam" id="PF07499">
    <property type="entry name" value="RuvA_C"/>
    <property type="match status" value="1"/>
</dbReference>
<dbReference type="Pfam" id="PF01330">
    <property type="entry name" value="RuvA_N"/>
    <property type="match status" value="1"/>
</dbReference>
<dbReference type="SUPFAM" id="SSF46929">
    <property type="entry name" value="DNA helicase RuvA subunit, C-terminal domain"/>
    <property type="match status" value="1"/>
</dbReference>
<dbReference type="SUPFAM" id="SSF50249">
    <property type="entry name" value="Nucleic acid-binding proteins"/>
    <property type="match status" value="1"/>
</dbReference>
<dbReference type="SUPFAM" id="SSF47781">
    <property type="entry name" value="RuvA domain 2-like"/>
    <property type="match status" value="1"/>
</dbReference>
<sequence length="205" mass="21658">MIGKLKGIIDSYGEDYVILDVQGVGYQVHCASRTLQALPSPGEAATLSIETYVREDQIKLFGFRTDTEREWFRLLQTVQSVGAKVALAVLSTLPPHDLANAIALRDKAAVARTPGVGPKVAERIVTELKDKVPALSAVDPAVVKLSGAIDDNRAPRAVTDAISALVNLGYGQPQAAAAVATASRTAGEDAETAQLIKLGLKELSK</sequence>
<reference key="1">
    <citation type="submission" date="2008-05" db="EMBL/GenBank/DDBJ databases">
        <title>Complete sequence of Rhodopseudomonas palustris TIE-1.</title>
        <authorList>
            <consortium name="US DOE Joint Genome Institute"/>
            <person name="Lucas S."/>
            <person name="Copeland A."/>
            <person name="Lapidus A."/>
            <person name="Glavina del Rio T."/>
            <person name="Dalin E."/>
            <person name="Tice H."/>
            <person name="Pitluck S."/>
            <person name="Chain P."/>
            <person name="Malfatti S."/>
            <person name="Shin M."/>
            <person name="Vergez L."/>
            <person name="Lang D."/>
            <person name="Schmutz J."/>
            <person name="Larimer F."/>
            <person name="Land M."/>
            <person name="Hauser L."/>
            <person name="Kyrpides N."/>
            <person name="Mikhailova N."/>
            <person name="Emerson D."/>
            <person name="Newman D.K."/>
            <person name="Roden E."/>
            <person name="Richardson P."/>
        </authorList>
    </citation>
    <scope>NUCLEOTIDE SEQUENCE [LARGE SCALE GENOMIC DNA]</scope>
    <source>
        <strain>TIE-1</strain>
    </source>
</reference>
<feature type="chain" id="PRO_1000090360" description="Holliday junction branch migration complex subunit RuvA">
    <location>
        <begin position="1"/>
        <end position="205"/>
    </location>
</feature>
<feature type="region of interest" description="Domain I" evidence="1">
    <location>
        <begin position="1"/>
        <end position="64"/>
    </location>
</feature>
<feature type="region of interest" description="Domain II" evidence="1">
    <location>
        <begin position="65"/>
        <end position="143"/>
    </location>
</feature>
<feature type="region of interest" description="Flexible linker" evidence="1">
    <location>
        <begin position="144"/>
        <end position="154"/>
    </location>
</feature>
<feature type="region of interest" description="Domain III" evidence="1">
    <location>
        <begin position="154"/>
        <end position="205"/>
    </location>
</feature>
<accession>B3QHS2</accession>
<gene>
    <name evidence="1" type="primary">ruvA</name>
    <name type="ordered locus">Rpal_1290</name>
</gene>
<evidence type="ECO:0000255" key="1">
    <source>
        <dbReference type="HAMAP-Rule" id="MF_00031"/>
    </source>
</evidence>
<comment type="function">
    <text evidence="1">The RuvA-RuvB-RuvC complex processes Holliday junction (HJ) DNA during genetic recombination and DNA repair, while the RuvA-RuvB complex plays an important role in the rescue of blocked DNA replication forks via replication fork reversal (RFR). RuvA specifically binds to HJ cruciform DNA, conferring on it an open structure. The RuvB hexamer acts as an ATP-dependent pump, pulling dsDNA into and through the RuvAB complex. HJ branch migration allows RuvC to scan DNA until it finds its consensus sequence, where it cleaves and resolves the cruciform DNA.</text>
</comment>
<comment type="subunit">
    <text evidence="1">Homotetramer. Forms an RuvA(8)-RuvB(12)-Holliday junction (HJ) complex. HJ DNA is sandwiched between 2 RuvA tetramers; dsDNA enters through RuvA and exits via RuvB. An RuvB hexamer assembles on each DNA strand where it exits the tetramer. Each RuvB hexamer is contacted by two RuvA subunits (via domain III) on 2 adjacent RuvB subunits; this complex drives branch migration. In the full resolvosome a probable DNA-RuvA(4)-RuvB(12)-RuvC(2) complex forms which resolves the HJ.</text>
</comment>
<comment type="subcellular location">
    <subcellularLocation>
        <location evidence="1">Cytoplasm</location>
    </subcellularLocation>
</comment>
<comment type="domain">
    <text evidence="1">Has three domains with a flexible linker between the domains II and III and assumes an 'L' shape. Domain III is highly mobile and contacts RuvB.</text>
</comment>
<comment type="similarity">
    <text evidence="1">Belongs to the RuvA family.</text>
</comment>
<proteinExistence type="inferred from homology"/>